<name>FMM1_NEIMB</name>
<feature type="propeptide" id="PRO_0000024164" description="Leader sequence" evidence="3">
    <location>
        <begin position="1"/>
        <end position="7"/>
    </location>
</feature>
<feature type="chain" id="PRO_0000024165" description="Fimbrial protein">
    <location>
        <begin position="8"/>
        <end position="170"/>
    </location>
</feature>
<feature type="transmembrane region" description="Helical" evidence="2">
    <location>
        <begin position="8"/>
        <end position="28"/>
    </location>
</feature>
<feature type="modified residue" description="N-methylphenylalanine" evidence="3 6">
    <location>
        <position position="8"/>
    </location>
</feature>
<feature type="modified residue" description="O-(sn-1-glycerophosphoryl)serine" evidence="8">
    <location>
        <position position="100"/>
    </location>
</feature>
<feature type="glycosylation site" id="CAR_000204" description="O-linked (Gal...) serine" evidence="9 10">
    <location>
        <position position="70"/>
    </location>
</feature>
<feature type="disulfide bond" evidence="1">
    <location>
        <begin position="127"/>
        <end position="163"/>
    </location>
</feature>
<feature type="sequence conflict" description="In Ref. 1; CAA30557." evidence="11" ref="1">
    <original>QMASSNVNN</original>
    <variation>TMLSSGVNK</variation>
    <location>
        <begin position="97"/>
        <end position="105"/>
    </location>
</feature>
<feature type="sequence conflict" description="In Ref. 1; CAA30557." evidence="11" ref="1">
    <original>DKAKAANDDVTAAAAANGKKID</original>
    <variation>NDTDDTVAAVAADNTGNIN</variation>
    <location>
        <begin position="134"/>
        <end position="155"/>
    </location>
</feature>
<feature type="helix" evidence="12">
    <location>
        <begin position="32"/>
        <end position="48"/>
    </location>
</feature>
<feature type="helix" evidence="12">
    <location>
        <begin position="51"/>
        <end position="61"/>
    </location>
</feature>
<feature type="helix" evidence="12">
    <location>
        <begin position="68"/>
        <end position="71"/>
    </location>
</feature>
<feature type="helix" evidence="12">
    <location>
        <begin position="76"/>
        <end position="78"/>
    </location>
</feature>
<feature type="strand" evidence="12">
    <location>
        <begin position="82"/>
        <end position="90"/>
    </location>
</feature>
<feature type="strand" evidence="12">
    <location>
        <begin position="93"/>
        <end position="98"/>
    </location>
</feature>
<feature type="turn" evidence="12">
    <location>
        <begin position="105"/>
        <end position="109"/>
    </location>
</feature>
<feature type="strand" evidence="12">
    <location>
        <begin position="111"/>
        <end position="118"/>
    </location>
</feature>
<feature type="strand" evidence="12">
    <location>
        <begin position="120"/>
        <end position="129"/>
    </location>
</feature>
<feature type="helix" evidence="12">
    <location>
        <begin position="156"/>
        <end position="158"/>
    </location>
</feature>
<keyword id="KW-0002">3D-structure</keyword>
<keyword id="KW-0130">Cell adhesion</keyword>
<keyword id="KW-0903">Direct protein sequencing</keyword>
<keyword id="KW-1015">Disulfide bond</keyword>
<keyword id="KW-0281">Fimbrium</keyword>
<keyword id="KW-0325">Glycoprotein</keyword>
<keyword id="KW-0472">Membrane</keyword>
<keyword id="KW-0488">Methylation</keyword>
<keyword id="KW-0597">Phosphoprotein</keyword>
<keyword id="KW-1185">Reference proteome</keyword>
<keyword id="KW-0812">Transmembrane</keyword>
<keyword id="KW-1133">Transmembrane helix</keyword>
<gene>
    <name type="primary">pilE</name>
    <name type="ordered locus">NMB0018</name>
</gene>
<proteinExistence type="evidence at protein level"/>
<organism>
    <name type="scientific">Neisseria meningitidis serogroup B (strain ATCC BAA-335 / MC58)</name>
    <dbReference type="NCBI Taxonomy" id="122586"/>
    <lineage>
        <taxon>Bacteria</taxon>
        <taxon>Pseudomonadati</taxon>
        <taxon>Pseudomonadota</taxon>
        <taxon>Betaproteobacteria</taxon>
        <taxon>Neisseriales</taxon>
        <taxon>Neisseriaceae</taxon>
        <taxon>Neisseria</taxon>
    </lineage>
</organism>
<sequence>MNTLQKGFTLIELMIVIAIVGILAAVALPAYQDYTARAQVSEAILLAEGQKSAVTEYYLNHGEWPGNNTSAGVATSSEIKGKYVKSVEVKNGVVTAQMASSNVNNEIKGKKLSLWAKRQNGSVKWFCGQPVTRDKAKAANDDVTAAAAANGKKIDTKHLPSTCRDASDAS</sequence>
<reference key="1">
    <citation type="journal article" date="1988" name="Mol. Microbiol.">
        <title>Nucleotide sequence of the structural gene for class I pilin from Neisseria meningitidis: homologies with the pilE locus of Neisseria gonorrhoeae.</title>
        <authorList>
            <person name="Potts W.J."/>
            <person name="Saunders J.R."/>
        </authorList>
    </citation>
    <scope>NUCLEOTIDE SEQUENCE [GENOMIC DNA]</scope>
    <source>
        <strain>C311 / Serogroup B</strain>
    </source>
</reference>
<reference key="2">
    <citation type="journal article" date="2000" name="Science">
        <title>Complete genome sequence of Neisseria meningitidis serogroup B strain MC58.</title>
        <authorList>
            <person name="Tettelin H."/>
            <person name="Saunders N.J."/>
            <person name="Heidelberg J.F."/>
            <person name="Jeffries A.C."/>
            <person name="Nelson K.E."/>
            <person name="Eisen J.A."/>
            <person name="Ketchum K.A."/>
            <person name="Hood D.W."/>
            <person name="Peden J.F."/>
            <person name="Dodson R.J."/>
            <person name="Nelson W.C."/>
            <person name="Gwinn M.L."/>
            <person name="DeBoy R.T."/>
            <person name="Peterson J.D."/>
            <person name="Hickey E.K."/>
            <person name="Haft D.H."/>
            <person name="Salzberg S.L."/>
            <person name="White O."/>
            <person name="Fleischmann R.D."/>
            <person name="Dougherty B.A."/>
            <person name="Mason T.M."/>
            <person name="Ciecko A."/>
            <person name="Parksey D.S."/>
            <person name="Blair E."/>
            <person name="Cittone H."/>
            <person name="Clark E.B."/>
            <person name="Cotton M.D."/>
            <person name="Utterback T.R."/>
            <person name="Khouri H.M."/>
            <person name="Qin H."/>
            <person name="Vamathevan J.J."/>
            <person name="Gill J."/>
            <person name="Scarlato V."/>
            <person name="Masignani V."/>
            <person name="Pizza M."/>
            <person name="Grandi G."/>
            <person name="Sun L."/>
            <person name="Smith H.O."/>
            <person name="Fraser C.M."/>
            <person name="Moxon E.R."/>
            <person name="Rappuoli R."/>
            <person name="Venter J.C."/>
        </authorList>
    </citation>
    <scope>NUCLEOTIDE SEQUENCE [LARGE SCALE GENOMIC DNA]</scope>
    <source>
        <strain>ATCC BAA-335 / MC58</strain>
    </source>
</reference>
<reference key="3">
    <citation type="journal article" date="1978" name="Biochemistry">
        <title>Neisseria pili proteins: amino-terminal amino acid sequences and identification of an unusual amino acid.</title>
        <authorList>
            <person name="Hermodson M.A."/>
            <person name="Chen K.C."/>
            <person name="Buchanan T.M."/>
        </authorList>
    </citation>
    <scope>PROTEIN SEQUENCE OF 8-36</scope>
    <scope>METHYLATION AT PHE-8</scope>
    <source>
        <strain>ATCC 13090</strain>
    </source>
</reference>
<reference key="4">
    <citation type="journal article" date="1996" name="Biochem. J.">
        <title>Discovery of a novel protein modification: alpha-glycerophosphate is a substituent of meningococcal pilin.</title>
        <authorList>
            <person name="Stimson E."/>
            <person name="Virji M."/>
            <person name="Barker S."/>
            <person name="Panico M."/>
            <person name="Blench I."/>
            <person name="Saunders J."/>
            <person name="Payne G."/>
            <person name="Moxon E.R."/>
            <person name="Dell A."/>
            <person name="Morris H.R."/>
        </authorList>
    </citation>
    <scope>PROTEIN SEQUENCE OF 98-103</scope>
    <scope>PHOSPHORYLATION AT SER-100</scope>
    <scope>IDENTIFICATION BY MASS SPECTROMETRY</scope>
</reference>
<reference key="5">
    <citation type="journal article" date="1993" name="Mol. Microbiol.">
        <title>Pilus-facilitated adherence of Neisseria meningitidis to human epithelial and endothelial cells: modulation of adherence phenotype occurs concurrently with changes in primary amino acid sequence and the glycosylation status of pilin.</title>
        <authorList>
            <person name="Virji M."/>
            <person name="Saunders J.R."/>
            <person name="Sims G."/>
            <person name="Makepeace K."/>
            <person name="Maskell D."/>
            <person name="Ferguson D.J."/>
        </authorList>
    </citation>
    <scope>FUNCTION</scope>
    <scope>GLYCOSYLATION</scope>
    <source>
        <strain>ATCC BAA-335 / MC58</strain>
    </source>
</reference>
<reference key="6">
    <citation type="journal article" date="1996" name="Ann. N. Y. Acad. Sci.">
        <title>Posttranslational modifications of meningococcal pili. Identification of a common trisaccharide substitution on variant pilins of strain C311.</title>
        <authorList>
            <person name="Virji M."/>
            <person name="Stimson E."/>
            <person name="Makepeace K."/>
            <person name="Dell A."/>
            <person name="Morris H.R."/>
            <person name="Payne G."/>
            <person name="Saunders J.R."/>
            <person name="Moxon E.R."/>
        </authorList>
    </citation>
    <scope>GLYCOSYLATION AT SER-70</scope>
    <scope>STRUCTURE OF CARBOHYDRATE ON SER-70</scope>
</reference>
<reference key="7">
    <citation type="journal article" date="1998" name="Mol. Microbiol.">
        <title>Consequences of the loss of O-linked glycosylation of meningococcal type IV pilin on piliation and pilus-mediated adhesion.</title>
        <authorList>
            <person name="Marceau M."/>
            <person name="Forest K."/>
            <person name="Beretti J.-L."/>
            <person name="Tainer J."/>
            <person name="Nassif X."/>
        </authorList>
    </citation>
    <scope>GLYCOSYLATION AT SER-70</scope>
</reference>
<reference key="8">
    <citation type="journal article" date="2006" name="Mol. Microbiol.">
        <title>Meningococcal biofilm formation: structure, development and phenotypes in a standardized continuous flow system.</title>
        <authorList>
            <person name="Lappann M."/>
            <person name="Haagensen J.A."/>
            <person name="Claus H."/>
            <person name="Vogel U."/>
            <person name="Molin S."/>
        </authorList>
    </citation>
    <scope>FUNCTION</scope>
    <scope>DISRUPTION PHENOTYPE</scope>
    <source>
        <strain>ATCC BAA-335 / MC58</strain>
    </source>
</reference>
<reference key="9">
    <citation type="journal article" date="2016" name="Nat. Commun.">
        <title>Structure of the Neisseria meningitidis Type IV pilus.</title>
        <authorList>
            <person name="Kolappan S."/>
            <person name="Coureuil M."/>
            <person name="Yu X."/>
            <person name="Nassif X."/>
            <person name="Egelman E.H."/>
            <person name="Craig L."/>
        </authorList>
    </citation>
    <scope>FUNCTION</scope>
    <source>
        <strain>8013</strain>
    </source>
</reference>
<evidence type="ECO:0000250" key="1"/>
<evidence type="ECO:0000255" key="2"/>
<evidence type="ECO:0000255" key="3">
    <source>
        <dbReference type="PROSITE-ProRule" id="PRU01070"/>
    </source>
</evidence>
<evidence type="ECO:0000269" key="4">
    <source>
    </source>
</evidence>
<evidence type="ECO:0000269" key="5">
    <source>
    </source>
</evidence>
<evidence type="ECO:0000269" key="6">
    <source>
    </source>
</evidence>
<evidence type="ECO:0000269" key="7">
    <source>
    </source>
</evidence>
<evidence type="ECO:0000269" key="8">
    <source>
    </source>
</evidence>
<evidence type="ECO:0000269" key="9">
    <source>
    </source>
</evidence>
<evidence type="ECO:0000269" key="10">
    <source>
    </source>
</evidence>
<evidence type="ECO:0000305" key="11"/>
<evidence type="ECO:0007829" key="12">
    <source>
        <dbReference type="PDB" id="4V1J"/>
    </source>
</evidence>
<comment type="function">
    <text evidence="4 5 7">Major component of the type IV pilus (T4P) that plays a role in cellular adherence, microcolony formation as well as twitching motility.</text>
</comment>
<comment type="subunit">
    <text>The pili are polar flexible filaments of about 5.4 nanometers diameter and 2.5 micrometers average length; they consist of only a single polypeptide chain arranged in a helical configuration of five subunits per turn in the assembled pilus.</text>
</comment>
<comment type="subcellular location">
    <subcellularLocation>
        <location>Fimbrium</location>
    </subcellularLocation>
    <subcellularLocation>
        <location evidence="2">Membrane</location>
        <topology evidence="2">Single-pass membrane protein</topology>
    </subcellularLocation>
</comment>
<comment type="PTM">
    <text evidence="7 10">O-linked glycan has been reported to consist either of the Gal(alpha1-3) GlcNAc disaccharide, or the Gal(beta 1-4) Gal(alpha 1-3) 2,4-diacetamido-2,4,6-trideoxyhexose trisaccharide.</text>
</comment>
<comment type="disruption phenotype">
    <text evidence="4">Deletion mutants are unpiliated but nevertheless form biofilms showing that attachment and accumulation of cells did not depend on pilus expression.</text>
</comment>
<comment type="similarity">
    <text evidence="11">Belongs to the N-Me-Phe pilin family.</text>
</comment>
<comment type="caution">
    <text evidence="11">In PubMed:413571 it is said that 50% of the peptides have N-methyl-Phe and 50% begin with Thr-9. N-terminal methylation produces preview during Edman degradation, which makes this appear to happen when the peptide is completely N-terminal methylated.</text>
</comment>
<dbReference type="EMBL" id="X07731">
    <property type="protein sequence ID" value="CAA30557.1"/>
    <property type="molecule type" value="Genomic_DNA"/>
</dbReference>
<dbReference type="EMBL" id="AE002098">
    <property type="protein sequence ID" value="AAF40497.1"/>
    <property type="molecule type" value="Genomic_DNA"/>
</dbReference>
<dbReference type="PIR" id="F81246">
    <property type="entry name" value="F81246"/>
</dbReference>
<dbReference type="PIR" id="S03091">
    <property type="entry name" value="S03091"/>
</dbReference>
<dbReference type="RefSeq" id="NP_273084.1">
    <property type="nucleotide sequence ID" value="NC_003112.2"/>
</dbReference>
<dbReference type="RefSeq" id="WP_010980743.1">
    <property type="nucleotide sequence ID" value="NC_003112.2"/>
</dbReference>
<dbReference type="PDB" id="4V1J">
    <property type="method" value="X-ray"/>
    <property type="resolution" value="1.43 A"/>
    <property type="chains" value="A=32-170"/>
</dbReference>
<dbReference type="PDBsum" id="4V1J"/>
<dbReference type="SMR" id="P05431"/>
<dbReference type="FunCoup" id="P05431">
    <property type="interactions" value="24"/>
</dbReference>
<dbReference type="STRING" id="122586.NMB0018"/>
<dbReference type="GlyConnect" id="162">
    <property type="glycosylation" value="1 O-Linked glycan (1 site)"/>
</dbReference>
<dbReference type="GlyCosmos" id="P05431">
    <property type="glycosylation" value="1 site, 2 glycans"/>
</dbReference>
<dbReference type="iPTMnet" id="P05431"/>
<dbReference type="PaxDb" id="122586-NMB0018"/>
<dbReference type="KEGG" id="nme:NMB0018"/>
<dbReference type="PATRIC" id="fig|122586.8.peg.24"/>
<dbReference type="HOGENOM" id="CLU_091705_4_0_4"/>
<dbReference type="InParanoid" id="P05431"/>
<dbReference type="OrthoDB" id="8607132at2"/>
<dbReference type="PHI-base" id="PHI:3826"/>
<dbReference type="Proteomes" id="UP000000425">
    <property type="component" value="Chromosome"/>
</dbReference>
<dbReference type="GO" id="GO:0016020">
    <property type="term" value="C:membrane"/>
    <property type="evidence" value="ECO:0007669"/>
    <property type="project" value="UniProtKB-SubCell"/>
</dbReference>
<dbReference type="GO" id="GO:0009289">
    <property type="term" value="C:pilus"/>
    <property type="evidence" value="ECO:0007669"/>
    <property type="project" value="UniProtKB-SubCell"/>
</dbReference>
<dbReference type="GO" id="GO:0007155">
    <property type="term" value="P:cell adhesion"/>
    <property type="evidence" value="ECO:0007669"/>
    <property type="project" value="UniProtKB-KW"/>
</dbReference>
<dbReference type="Gene3D" id="3.30.700.10">
    <property type="entry name" value="Glycoprotein, Type 4 Pilin"/>
    <property type="match status" value="1"/>
</dbReference>
<dbReference type="InterPro" id="IPR012902">
    <property type="entry name" value="N_methyl_site"/>
</dbReference>
<dbReference type="InterPro" id="IPR001082">
    <property type="entry name" value="Pilin"/>
</dbReference>
<dbReference type="InterPro" id="IPR045584">
    <property type="entry name" value="Pilin-like"/>
</dbReference>
<dbReference type="InterPro" id="IPR050470">
    <property type="entry name" value="T4P/T2SS_Core"/>
</dbReference>
<dbReference type="NCBIfam" id="TIGR02532">
    <property type="entry name" value="IV_pilin_GFxxxE"/>
    <property type="match status" value="1"/>
</dbReference>
<dbReference type="PANTHER" id="PTHR30093">
    <property type="entry name" value="GENERAL SECRETION PATHWAY PROTEIN G"/>
    <property type="match status" value="1"/>
</dbReference>
<dbReference type="PANTHER" id="PTHR30093:SF34">
    <property type="entry name" value="PREPILIN PEPTIDASE-DEPENDENT PROTEIN D"/>
    <property type="match status" value="1"/>
</dbReference>
<dbReference type="Pfam" id="PF07963">
    <property type="entry name" value="N_methyl"/>
    <property type="match status" value="1"/>
</dbReference>
<dbReference type="Pfam" id="PF00114">
    <property type="entry name" value="Pilin"/>
    <property type="match status" value="1"/>
</dbReference>
<dbReference type="SUPFAM" id="SSF54523">
    <property type="entry name" value="Pili subunits"/>
    <property type="match status" value="1"/>
</dbReference>
<dbReference type="PROSITE" id="PS00409">
    <property type="entry name" value="PROKAR_NTER_METHYL"/>
    <property type="match status" value="1"/>
</dbReference>
<protein>
    <recommendedName>
        <fullName>Fimbrial protein</fullName>
    </recommendedName>
    <alternativeName>
        <fullName>Pilin</fullName>
    </alternativeName>
</protein>
<accession>P05431</accession>